<protein>
    <recommendedName>
        <fullName evidence="1">Small ribosomal subunit protein bS20</fullName>
    </recommendedName>
    <alternativeName>
        <fullName evidence="3">30S ribosomal protein S20</fullName>
    </alternativeName>
</protein>
<accession>Q5H2E4</accession>
<dbReference type="EMBL" id="AE013598">
    <property type="protein sequence ID" value="AAW74877.1"/>
    <property type="molecule type" value="Genomic_DNA"/>
</dbReference>
<dbReference type="SMR" id="Q5H2E4"/>
<dbReference type="STRING" id="291331.XOO1623"/>
<dbReference type="KEGG" id="xoo:XOO1623"/>
<dbReference type="HOGENOM" id="CLU_160655_4_0_6"/>
<dbReference type="Proteomes" id="UP000006735">
    <property type="component" value="Chromosome"/>
</dbReference>
<dbReference type="GO" id="GO:0005829">
    <property type="term" value="C:cytosol"/>
    <property type="evidence" value="ECO:0007669"/>
    <property type="project" value="TreeGrafter"/>
</dbReference>
<dbReference type="GO" id="GO:0015935">
    <property type="term" value="C:small ribosomal subunit"/>
    <property type="evidence" value="ECO:0007669"/>
    <property type="project" value="TreeGrafter"/>
</dbReference>
<dbReference type="GO" id="GO:0070181">
    <property type="term" value="F:small ribosomal subunit rRNA binding"/>
    <property type="evidence" value="ECO:0007669"/>
    <property type="project" value="TreeGrafter"/>
</dbReference>
<dbReference type="GO" id="GO:0003735">
    <property type="term" value="F:structural constituent of ribosome"/>
    <property type="evidence" value="ECO:0007669"/>
    <property type="project" value="InterPro"/>
</dbReference>
<dbReference type="GO" id="GO:0006412">
    <property type="term" value="P:translation"/>
    <property type="evidence" value="ECO:0007669"/>
    <property type="project" value="UniProtKB-UniRule"/>
</dbReference>
<dbReference type="FunFam" id="1.20.58.110:FF:000001">
    <property type="entry name" value="30S ribosomal protein S20"/>
    <property type="match status" value="1"/>
</dbReference>
<dbReference type="Gene3D" id="1.20.58.110">
    <property type="entry name" value="Ribosomal protein S20"/>
    <property type="match status" value="1"/>
</dbReference>
<dbReference type="HAMAP" id="MF_00500">
    <property type="entry name" value="Ribosomal_bS20"/>
    <property type="match status" value="1"/>
</dbReference>
<dbReference type="InterPro" id="IPR002583">
    <property type="entry name" value="Ribosomal_bS20"/>
</dbReference>
<dbReference type="InterPro" id="IPR036510">
    <property type="entry name" value="Ribosomal_bS20_sf"/>
</dbReference>
<dbReference type="NCBIfam" id="TIGR00029">
    <property type="entry name" value="S20"/>
    <property type="match status" value="1"/>
</dbReference>
<dbReference type="PANTHER" id="PTHR33398">
    <property type="entry name" value="30S RIBOSOMAL PROTEIN S20"/>
    <property type="match status" value="1"/>
</dbReference>
<dbReference type="PANTHER" id="PTHR33398:SF1">
    <property type="entry name" value="SMALL RIBOSOMAL SUBUNIT PROTEIN BS20C"/>
    <property type="match status" value="1"/>
</dbReference>
<dbReference type="Pfam" id="PF01649">
    <property type="entry name" value="Ribosomal_S20p"/>
    <property type="match status" value="1"/>
</dbReference>
<dbReference type="SUPFAM" id="SSF46992">
    <property type="entry name" value="Ribosomal protein S20"/>
    <property type="match status" value="1"/>
</dbReference>
<proteinExistence type="inferred from homology"/>
<reference key="1">
    <citation type="journal article" date="2005" name="Nucleic Acids Res.">
        <title>The genome sequence of Xanthomonas oryzae pathovar oryzae KACC10331, the bacterial blight pathogen of rice.</title>
        <authorList>
            <person name="Lee B.-M."/>
            <person name="Park Y.-J."/>
            <person name="Park D.-S."/>
            <person name="Kang H.-W."/>
            <person name="Kim J.-G."/>
            <person name="Song E.-S."/>
            <person name="Park I.-C."/>
            <person name="Yoon U.-H."/>
            <person name="Hahn J.-H."/>
            <person name="Koo B.-S."/>
            <person name="Lee G.-B."/>
            <person name="Kim H."/>
            <person name="Park H.-S."/>
            <person name="Yoon K.-O."/>
            <person name="Kim J.-H."/>
            <person name="Jung C.-H."/>
            <person name="Koh N.-H."/>
            <person name="Seo J.-S."/>
            <person name="Go S.-J."/>
        </authorList>
    </citation>
    <scope>NUCLEOTIDE SEQUENCE [LARGE SCALE GENOMIC DNA]</scope>
    <source>
        <strain>KACC10331 / KXO85</strain>
    </source>
</reference>
<comment type="function">
    <text evidence="1">Binds directly to 16S ribosomal RNA.</text>
</comment>
<comment type="similarity">
    <text evidence="1">Belongs to the bacterial ribosomal protein bS20 family.</text>
</comment>
<sequence>MANIKSAKKRAKQTIVRNERNTGQRSMLRTAVKKVIKALDANDAAGAEAAFAVAQPILDRFSARGLIHKNKAARHKSRLTARIKAIKAA</sequence>
<feature type="chain" id="PRO_0000168065" description="Small ribosomal subunit protein bS20">
    <location>
        <begin position="1"/>
        <end position="89"/>
    </location>
</feature>
<feature type="region of interest" description="Disordered" evidence="2">
    <location>
        <begin position="1"/>
        <end position="22"/>
    </location>
</feature>
<feature type="compositionally biased region" description="Basic residues" evidence="2">
    <location>
        <begin position="1"/>
        <end position="12"/>
    </location>
</feature>
<gene>
    <name evidence="1" type="primary">rpsT</name>
    <name type="ordered locus">XOO1623</name>
</gene>
<evidence type="ECO:0000255" key="1">
    <source>
        <dbReference type="HAMAP-Rule" id="MF_00500"/>
    </source>
</evidence>
<evidence type="ECO:0000256" key="2">
    <source>
        <dbReference type="SAM" id="MobiDB-lite"/>
    </source>
</evidence>
<evidence type="ECO:0000305" key="3"/>
<organism>
    <name type="scientific">Xanthomonas oryzae pv. oryzae (strain KACC10331 / KXO85)</name>
    <dbReference type="NCBI Taxonomy" id="291331"/>
    <lineage>
        <taxon>Bacteria</taxon>
        <taxon>Pseudomonadati</taxon>
        <taxon>Pseudomonadota</taxon>
        <taxon>Gammaproteobacteria</taxon>
        <taxon>Lysobacterales</taxon>
        <taxon>Lysobacteraceae</taxon>
        <taxon>Xanthomonas</taxon>
    </lineage>
</organism>
<keyword id="KW-1185">Reference proteome</keyword>
<keyword id="KW-0687">Ribonucleoprotein</keyword>
<keyword id="KW-0689">Ribosomal protein</keyword>
<keyword id="KW-0694">RNA-binding</keyword>
<keyword id="KW-0699">rRNA-binding</keyword>
<name>RS20_XANOR</name>